<reference key="1">
    <citation type="journal article" date="2010" name="J. Bacteriol.">
        <title>The genetic basis of laboratory adaptation in Caulobacter crescentus.</title>
        <authorList>
            <person name="Marks M.E."/>
            <person name="Castro-Rojas C.M."/>
            <person name="Teiling C."/>
            <person name="Du L."/>
            <person name="Kapatral V."/>
            <person name="Walunas T.L."/>
            <person name="Crosson S."/>
        </authorList>
    </citation>
    <scope>NUCLEOTIDE SEQUENCE [LARGE SCALE GENOMIC DNA]</scope>
    <source>
        <strain>NA1000 / CB15N</strain>
    </source>
</reference>
<comment type="catalytic activity">
    <reaction evidence="1">
        <text>tRNA(Lys) + L-lysine + ATP = L-lysyl-tRNA(Lys) + AMP + diphosphate</text>
        <dbReference type="Rhea" id="RHEA:20792"/>
        <dbReference type="Rhea" id="RHEA-COMP:9696"/>
        <dbReference type="Rhea" id="RHEA-COMP:9697"/>
        <dbReference type="ChEBI" id="CHEBI:30616"/>
        <dbReference type="ChEBI" id="CHEBI:32551"/>
        <dbReference type="ChEBI" id="CHEBI:33019"/>
        <dbReference type="ChEBI" id="CHEBI:78442"/>
        <dbReference type="ChEBI" id="CHEBI:78529"/>
        <dbReference type="ChEBI" id="CHEBI:456215"/>
        <dbReference type="EC" id="6.1.1.6"/>
    </reaction>
</comment>
<comment type="subcellular location">
    <subcellularLocation>
        <location evidence="1">Cytoplasm</location>
    </subcellularLocation>
</comment>
<comment type="similarity">
    <text evidence="1">Belongs to the class-I aminoacyl-tRNA synthetase family.</text>
</comment>
<protein>
    <recommendedName>
        <fullName evidence="1">Lysine--tRNA ligase</fullName>
        <ecNumber evidence="1">6.1.1.6</ecNumber>
    </recommendedName>
    <alternativeName>
        <fullName evidence="1">Lysyl-tRNA synthetase</fullName>
        <shortName evidence="1">LysRS</shortName>
    </alternativeName>
</protein>
<accession>B8GXH3</accession>
<proteinExistence type="inferred from homology"/>
<dbReference type="EC" id="6.1.1.6" evidence="1"/>
<dbReference type="EMBL" id="CP001340">
    <property type="protein sequence ID" value="ACL93549.1"/>
    <property type="molecule type" value="Genomic_DNA"/>
</dbReference>
<dbReference type="RefSeq" id="WP_010917973.1">
    <property type="nucleotide sequence ID" value="NC_011916.1"/>
</dbReference>
<dbReference type="RefSeq" id="YP_002515457.1">
    <property type="nucleotide sequence ID" value="NC_011916.1"/>
</dbReference>
<dbReference type="SMR" id="B8GXH3"/>
<dbReference type="GeneID" id="7332173"/>
<dbReference type="KEGG" id="ccs:CCNA_00082"/>
<dbReference type="PATRIC" id="fig|565050.3.peg.82"/>
<dbReference type="HOGENOM" id="CLU_025562_2_0_5"/>
<dbReference type="OrthoDB" id="9803151at2"/>
<dbReference type="PhylomeDB" id="B8GXH3"/>
<dbReference type="Proteomes" id="UP000001364">
    <property type="component" value="Chromosome"/>
</dbReference>
<dbReference type="GO" id="GO:0005737">
    <property type="term" value="C:cytoplasm"/>
    <property type="evidence" value="ECO:0007669"/>
    <property type="project" value="UniProtKB-SubCell"/>
</dbReference>
<dbReference type="GO" id="GO:0005524">
    <property type="term" value="F:ATP binding"/>
    <property type="evidence" value="ECO:0007669"/>
    <property type="project" value="UniProtKB-UniRule"/>
</dbReference>
<dbReference type="GO" id="GO:0004824">
    <property type="term" value="F:lysine-tRNA ligase activity"/>
    <property type="evidence" value="ECO:0007669"/>
    <property type="project" value="UniProtKB-UniRule"/>
</dbReference>
<dbReference type="GO" id="GO:0000049">
    <property type="term" value="F:tRNA binding"/>
    <property type="evidence" value="ECO:0007669"/>
    <property type="project" value="InterPro"/>
</dbReference>
<dbReference type="GO" id="GO:0006430">
    <property type="term" value="P:lysyl-tRNA aminoacylation"/>
    <property type="evidence" value="ECO:0007669"/>
    <property type="project" value="UniProtKB-UniRule"/>
</dbReference>
<dbReference type="Gene3D" id="1.10.10.350">
    <property type="match status" value="1"/>
</dbReference>
<dbReference type="Gene3D" id="3.40.50.620">
    <property type="entry name" value="HUPs"/>
    <property type="match status" value="2"/>
</dbReference>
<dbReference type="HAMAP" id="MF_00177">
    <property type="entry name" value="Lys_tRNA_synth_class1"/>
    <property type="match status" value="1"/>
</dbReference>
<dbReference type="InterPro" id="IPR020751">
    <property type="entry name" value="aa-tRNA-synth_I_codon-bd_sub2"/>
</dbReference>
<dbReference type="InterPro" id="IPR001412">
    <property type="entry name" value="aa-tRNA-synth_I_CS"/>
</dbReference>
<dbReference type="InterPro" id="IPR008925">
    <property type="entry name" value="aa_tRNA-synth_I_cd-bd_sf"/>
</dbReference>
<dbReference type="InterPro" id="IPR002904">
    <property type="entry name" value="Lys-tRNA-ligase"/>
</dbReference>
<dbReference type="InterPro" id="IPR014729">
    <property type="entry name" value="Rossmann-like_a/b/a_fold"/>
</dbReference>
<dbReference type="NCBIfam" id="TIGR00467">
    <property type="entry name" value="lysS_arch"/>
    <property type="match status" value="1"/>
</dbReference>
<dbReference type="NCBIfam" id="NF001968">
    <property type="entry name" value="PRK00750.1-2"/>
    <property type="match status" value="1"/>
</dbReference>
<dbReference type="PANTHER" id="PTHR37940">
    <property type="entry name" value="LYSINE--TRNA LIGASE"/>
    <property type="match status" value="1"/>
</dbReference>
<dbReference type="PANTHER" id="PTHR37940:SF1">
    <property type="entry name" value="LYSINE--TRNA LIGASE"/>
    <property type="match status" value="1"/>
</dbReference>
<dbReference type="Pfam" id="PF01921">
    <property type="entry name" value="tRNA-synt_1f"/>
    <property type="match status" value="1"/>
</dbReference>
<dbReference type="SUPFAM" id="SSF48163">
    <property type="entry name" value="An anticodon-binding domain of class I aminoacyl-tRNA synthetases"/>
    <property type="match status" value="1"/>
</dbReference>
<dbReference type="SUPFAM" id="SSF52374">
    <property type="entry name" value="Nucleotidylyl transferase"/>
    <property type="match status" value="1"/>
</dbReference>
<dbReference type="PROSITE" id="PS00178">
    <property type="entry name" value="AA_TRNA_LIGASE_I"/>
    <property type="match status" value="1"/>
</dbReference>
<gene>
    <name evidence="1" type="primary">lysS</name>
    <name type="ordered locus">CCNA_00082</name>
</gene>
<name>SYK_CAUVN</name>
<keyword id="KW-0030">Aminoacyl-tRNA synthetase</keyword>
<keyword id="KW-0067">ATP-binding</keyword>
<keyword id="KW-0963">Cytoplasm</keyword>
<keyword id="KW-0436">Ligase</keyword>
<keyword id="KW-0547">Nucleotide-binding</keyword>
<keyword id="KW-0648">Protein biosynthesis</keyword>
<keyword id="KW-1185">Reference proteome</keyword>
<sequence length="552" mass="61026">MFEGLSPLARDARSWPFEQARATIARVLRVRLPDRADQDAAKALIDAGKTDEAVKAYPALAKAVIFETGYGPSGLPHLGTFGEVARTTMVRQAFRALTDEAIPTRLIAFSDDMDGLRKVPDNIENKQPLIEDLGKPLTVVRDPFGTHDSFGAHNNARLRAFLDGFGFEYEFVSSTDCYKGGLFDATLLTALERFDAIQKVMLPTLGEERRATYSPFLPISPSTGKVLQVPTLERNVEKGTIVFEDEDGSKVEVPVTGGHVKMQWKPDWAMRWTALGVDYEMSGKDLIDSVKASGAICKALGGVPPEGFNYELFLDENNQKISKSKGNGLSMEDWLRYGAPESLSYYMFQSPKSAKKLYFDVIPKASDEYLQQLDGFGRQEPAKQLDNPVWHIHGGKPPQQGSPVSFSLMLNLVSAADASTKEILWGFLSRYIPGASPETQPLLDRLAGYAINYYEDFVKPSKVFRAPSDQERAAMLDLLAKLKAMPAGTQDAELIQNEVFEVGKTHGFDPLRAWFQALYEVLLGQSQGPRFGSFAAIFGIDRTVALIEEKLG</sequence>
<organism>
    <name type="scientific">Caulobacter vibrioides (strain NA1000 / CB15N)</name>
    <name type="common">Caulobacter crescentus</name>
    <dbReference type="NCBI Taxonomy" id="565050"/>
    <lineage>
        <taxon>Bacteria</taxon>
        <taxon>Pseudomonadati</taxon>
        <taxon>Pseudomonadota</taxon>
        <taxon>Alphaproteobacteria</taxon>
        <taxon>Caulobacterales</taxon>
        <taxon>Caulobacteraceae</taxon>
        <taxon>Caulobacter</taxon>
    </lineage>
</organism>
<evidence type="ECO:0000255" key="1">
    <source>
        <dbReference type="HAMAP-Rule" id="MF_00177"/>
    </source>
</evidence>
<feature type="chain" id="PRO_1000199265" description="Lysine--tRNA ligase">
    <location>
        <begin position="1"/>
        <end position="552"/>
    </location>
</feature>
<feature type="short sequence motif" description="'HIGH' region">
    <location>
        <begin position="72"/>
        <end position="80"/>
    </location>
</feature>
<feature type="short sequence motif" description="'KMSKS' region">
    <location>
        <begin position="320"/>
        <end position="324"/>
    </location>
</feature>
<feature type="binding site" evidence="1">
    <location>
        <position position="323"/>
    </location>
    <ligand>
        <name>ATP</name>
        <dbReference type="ChEBI" id="CHEBI:30616"/>
    </ligand>
</feature>